<comment type="function">
    <text evidence="1">Catalyzes the pyruvoyl-dependent decarboxylation of aspartate to produce beta-alanine.</text>
</comment>
<comment type="catalytic activity">
    <reaction evidence="1">
        <text>L-aspartate + H(+) = beta-alanine + CO2</text>
        <dbReference type="Rhea" id="RHEA:19497"/>
        <dbReference type="ChEBI" id="CHEBI:15378"/>
        <dbReference type="ChEBI" id="CHEBI:16526"/>
        <dbReference type="ChEBI" id="CHEBI:29991"/>
        <dbReference type="ChEBI" id="CHEBI:57966"/>
        <dbReference type="EC" id="4.1.1.11"/>
    </reaction>
</comment>
<comment type="cofactor">
    <cofactor evidence="1">
        <name>pyruvate</name>
        <dbReference type="ChEBI" id="CHEBI:15361"/>
    </cofactor>
    <text evidence="1">Binds 1 pyruvoyl group covalently per subunit.</text>
</comment>
<comment type="pathway">
    <text evidence="1">Cofactor biosynthesis; (R)-pantothenate biosynthesis; beta-alanine from L-aspartate: step 1/1.</text>
</comment>
<comment type="subunit">
    <text evidence="1">Heterooctamer of four alpha and four beta subunits.</text>
</comment>
<comment type="subcellular location">
    <subcellularLocation>
        <location evidence="1">Cytoplasm</location>
    </subcellularLocation>
</comment>
<comment type="PTM">
    <text evidence="1">Is synthesized initially as an inactive proenzyme, which is activated by self-cleavage at a specific serine bond to produce a beta-subunit with a hydroxyl group at its C-terminus and an alpha-subunit with a pyruvoyl group at its N-terminus.</text>
</comment>
<comment type="similarity">
    <text evidence="1">Belongs to the PanD family.</text>
</comment>
<comment type="sequence caution" evidence="2">
    <conflict type="erroneous initiation">
        <sequence resource="EMBL-CDS" id="ABF45717"/>
    </conflict>
</comment>
<feature type="chain" id="PRO_0000306963" description="Aspartate 1-decarboxylase beta chain" evidence="1">
    <location>
        <begin position="1"/>
        <end position="24"/>
    </location>
</feature>
<feature type="chain" id="PRO_0000306964" description="Aspartate 1-decarboxylase alpha chain" evidence="1">
    <location>
        <begin position="25"/>
        <end position="120"/>
    </location>
</feature>
<feature type="active site" description="Schiff-base intermediate with substrate; via pyruvic acid" evidence="1">
    <location>
        <position position="25"/>
    </location>
</feature>
<feature type="active site" description="Proton donor" evidence="1">
    <location>
        <position position="58"/>
    </location>
</feature>
<feature type="binding site" evidence="1">
    <location>
        <position position="57"/>
    </location>
    <ligand>
        <name>substrate</name>
    </ligand>
</feature>
<feature type="binding site" evidence="1">
    <location>
        <begin position="73"/>
        <end position="75"/>
    </location>
    <ligand>
        <name>substrate</name>
    </ligand>
</feature>
<feature type="modified residue" description="Pyruvic acid (Ser)" evidence="1">
    <location>
        <position position="25"/>
    </location>
</feature>
<gene>
    <name evidence="1" type="primary">panD</name>
    <name type="ordered locus">Dgeo_1422</name>
</gene>
<dbReference type="EC" id="4.1.1.11" evidence="1"/>
<dbReference type="EMBL" id="CP000359">
    <property type="protein sequence ID" value="ABF45717.1"/>
    <property type="status" value="ALT_INIT"/>
    <property type="molecule type" value="Genomic_DNA"/>
</dbReference>
<dbReference type="SMR" id="Q1IYG7"/>
<dbReference type="STRING" id="319795.Dgeo_1422"/>
<dbReference type="KEGG" id="dge:Dgeo_1422"/>
<dbReference type="eggNOG" id="COG0853">
    <property type="taxonomic scope" value="Bacteria"/>
</dbReference>
<dbReference type="HOGENOM" id="CLU_115305_2_0_0"/>
<dbReference type="UniPathway" id="UPA00028">
    <property type="reaction ID" value="UER00002"/>
</dbReference>
<dbReference type="Proteomes" id="UP000002431">
    <property type="component" value="Chromosome"/>
</dbReference>
<dbReference type="GO" id="GO:0005829">
    <property type="term" value="C:cytosol"/>
    <property type="evidence" value="ECO:0007669"/>
    <property type="project" value="TreeGrafter"/>
</dbReference>
<dbReference type="GO" id="GO:0004068">
    <property type="term" value="F:aspartate 1-decarboxylase activity"/>
    <property type="evidence" value="ECO:0007669"/>
    <property type="project" value="UniProtKB-UniRule"/>
</dbReference>
<dbReference type="GO" id="GO:0006523">
    <property type="term" value="P:alanine biosynthetic process"/>
    <property type="evidence" value="ECO:0007669"/>
    <property type="project" value="InterPro"/>
</dbReference>
<dbReference type="GO" id="GO:0015940">
    <property type="term" value="P:pantothenate biosynthetic process"/>
    <property type="evidence" value="ECO:0007669"/>
    <property type="project" value="UniProtKB-UniRule"/>
</dbReference>
<dbReference type="CDD" id="cd06919">
    <property type="entry name" value="Asp_decarbox"/>
    <property type="match status" value="1"/>
</dbReference>
<dbReference type="Gene3D" id="2.40.40.20">
    <property type="match status" value="1"/>
</dbReference>
<dbReference type="HAMAP" id="MF_00446">
    <property type="entry name" value="PanD"/>
    <property type="match status" value="1"/>
</dbReference>
<dbReference type="InterPro" id="IPR009010">
    <property type="entry name" value="Asp_de-COase-like_dom_sf"/>
</dbReference>
<dbReference type="InterPro" id="IPR003190">
    <property type="entry name" value="Asp_decarbox"/>
</dbReference>
<dbReference type="NCBIfam" id="TIGR00223">
    <property type="entry name" value="panD"/>
    <property type="match status" value="1"/>
</dbReference>
<dbReference type="PANTHER" id="PTHR21012">
    <property type="entry name" value="ASPARTATE 1-DECARBOXYLASE"/>
    <property type="match status" value="1"/>
</dbReference>
<dbReference type="PANTHER" id="PTHR21012:SF0">
    <property type="entry name" value="ASPARTATE 1-DECARBOXYLASE"/>
    <property type="match status" value="1"/>
</dbReference>
<dbReference type="Pfam" id="PF02261">
    <property type="entry name" value="Asp_decarbox"/>
    <property type="match status" value="1"/>
</dbReference>
<dbReference type="PIRSF" id="PIRSF006246">
    <property type="entry name" value="Asp_decarbox"/>
    <property type="match status" value="1"/>
</dbReference>
<dbReference type="SUPFAM" id="SSF50692">
    <property type="entry name" value="ADC-like"/>
    <property type="match status" value="1"/>
</dbReference>
<sequence length="120" mass="13033">MERIMFRAKIHRATVTQADLDYVGSVTIDQDLLDAADILVNERVDIYNITNGNRLSTYALSGPRGSGVIGINGAAAHLVQPGDLVIIAAYGNFSEEEARTLEPRVVLVDAQNRILDLQPA</sequence>
<protein>
    <recommendedName>
        <fullName evidence="1">Aspartate 1-decarboxylase</fullName>
        <ecNumber evidence="1">4.1.1.11</ecNumber>
    </recommendedName>
    <alternativeName>
        <fullName evidence="1">Aspartate alpha-decarboxylase</fullName>
    </alternativeName>
    <component>
        <recommendedName>
            <fullName evidence="1">Aspartate 1-decarboxylase beta chain</fullName>
        </recommendedName>
    </component>
    <component>
        <recommendedName>
            <fullName evidence="1">Aspartate 1-decarboxylase alpha chain</fullName>
        </recommendedName>
    </component>
</protein>
<reference key="1">
    <citation type="submission" date="2006-04" db="EMBL/GenBank/DDBJ databases">
        <title>Complete sequence of chromosome of Deinococcus geothermalis DSM 11300.</title>
        <authorList>
            <person name="Copeland A."/>
            <person name="Lucas S."/>
            <person name="Lapidus A."/>
            <person name="Barry K."/>
            <person name="Detter J.C."/>
            <person name="Glavina del Rio T."/>
            <person name="Hammon N."/>
            <person name="Israni S."/>
            <person name="Dalin E."/>
            <person name="Tice H."/>
            <person name="Pitluck S."/>
            <person name="Brettin T."/>
            <person name="Bruce D."/>
            <person name="Han C."/>
            <person name="Tapia R."/>
            <person name="Saunders E."/>
            <person name="Gilna P."/>
            <person name="Schmutz J."/>
            <person name="Larimer F."/>
            <person name="Land M."/>
            <person name="Hauser L."/>
            <person name="Kyrpides N."/>
            <person name="Kim E."/>
            <person name="Daly M.J."/>
            <person name="Fredrickson J.K."/>
            <person name="Makarova K.S."/>
            <person name="Gaidamakova E.K."/>
            <person name="Zhai M."/>
            <person name="Richardson P."/>
        </authorList>
    </citation>
    <scope>NUCLEOTIDE SEQUENCE [LARGE SCALE GENOMIC DNA]</scope>
    <source>
        <strain>DSM 11300 / CIP 105573 / AG-3a</strain>
    </source>
</reference>
<keyword id="KW-0068">Autocatalytic cleavage</keyword>
<keyword id="KW-0963">Cytoplasm</keyword>
<keyword id="KW-0210">Decarboxylase</keyword>
<keyword id="KW-0456">Lyase</keyword>
<keyword id="KW-0566">Pantothenate biosynthesis</keyword>
<keyword id="KW-0670">Pyruvate</keyword>
<keyword id="KW-0704">Schiff base</keyword>
<keyword id="KW-0865">Zymogen</keyword>
<proteinExistence type="inferred from homology"/>
<organism>
    <name type="scientific">Deinococcus geothermalis (strain DSM 11300 / CIP 105573 / AG-3a)</name>
    <dbReference type="NCBI Taxonomy" id="319795"/>
    <lineage>
        <taxon>Bacteria</taxon>
        <taxon>Thermotogati</taxon>
        <taxon>Deinococcota</taxon>
        <taxon>Deinococci</taxon>
        <taxon>Deinococcales</taxon>
        <taxon>Deinococcaceae</taxon>
        <taxon>Deinococcus</taxon>
    </lineage>
</organism>
<accession>Q1IYG7</accession>
<name>PAND_DEIGD</name>
<evidence type="ECO:0000255" key="1">
    <source>
        <dbReference type="HAMAP-Rule" id="MF_00446"/>
    </source>
</evidence>
<evidence type="ECO:0000305" key="2"/>